<feature type="chain" id="PRO_0000277829" description="Mitogen-activated protein kinase kinase kinase 11">
    <location>
        <begin position="1"/>
        <end position="850"/>
    </location>
</feature>
<feature type="domain" description="SH3" evidence="5">
    <location>
        <begin position="42"/>
        <end position="106"/>
    </location>
</feature>
<feature type="domain" description="Protein kinase" evidence="4">
    <location>
        <begin position="118"/>
        <end position="380"/>
    </location>
</feature>
<feature type="region of interest" description="Disordered" evidence="7">
    <location>
        <begin position="18"/>
        <end position="37"/>
    </location>
</feature>
<feature type="region of interest" description="Leucine-zipper 1">
    <location>
        <begin position="404"/>
        <end position="425"/>
    </location>
</feature>
<feature type="region of interest" description="Leucine-zipper 2">
    <location>
        <begin position="439"/>
        <end position="460"/>
    </location>
</feature>
<feature type="region of interest" description="Disordered" evidence="7">
    <location>
        <begin position="536"/>
        <end position="850"/>
    </location>
</feature>
<feature type="compositionally biased region" description="Gly residues" evidence="7">
    <location>
        <begin position="18"/>
        <end position="31"/>
    </location>
</feature>
<feature type="compositionally biased region" description="Basic and acidic residues" evidence="7">
    <location>
        <begin position="551"/>
        <end position="563"/>
    </location>
</feature>
<feature type="compositionally biased region" description="Low complexity" evidence="7">
    <location>
        <begin position="598"/>
        <end position="610"/>
    </location>
</feature>
<feature type="compositionally biased region" description="Pro residues" evidence="7">
    <location>
        <begin position="677"/>
        <end position="693"/>
    </location>
</feature>
<feature type="compositionally biased region" description="Pro residues" evidence="7">
    <location>
        <begin position="790"/>
        <end position="802"/>
    </location>
</feature>
<feature type="compositionally biased region" description="Low complexity" evidence="7">
    <location>
        <begin position="803"/>
        <end position="819"/>
    </location>
</feature>
<feature type="active site" description="Proton acceptor" evidence="4 6">
    <location>
        <position position="242"/>
    </location>
</feature>
<feature type="binding site" evidence="4">
    <location>
        <begin position="124"/>
        <end position="132"/>
    </location>
    <ligand>
        <name>ATP</name>
        <dbReference type="ChEBI" id="CHEBI:30616"/>
    </ligand>
</feature>
<feature type="binding site" evidence="4">
    <location>
        <position position="145"/>
    </location>
    <ligand>
        <name>ATP</name>
        <dbReference type="ChEBI" id="CHEBI:30616"/>
    </ligand>
</feature>
<feature type="modified residue" description="Phosphoserine" evidence="2">
    <location>
        <position position="11"/>
    </location>
</feature>
<feature type="modified residue" description="Phosphoserine" evidence="3">
    <location>
        <position position="35"/>
    </location>
</feature>
<feature type="modified residue" description="Phosphothreonine; by autocatalysis" evidence="2">
    <location>
        <position position="278"/>
    </location>
</feature>
<feature type="modified residue" description="Phosphoserine; by autocatalysis and MAP4K1" evidence="2">
    <location>
        <position position="282"/>
    </location>
</feature>
<feature type="modified residue" description="Phosphoserine" evidence="2">
    <location>
        <position position="395"/>
    </location>
</feature>
<feature type="modified residue" description="Phosphoserine" evidence="10">
    <location>
        <position position="508"/>
    </location>
</feature>
<feature type="modified residue" description="Phosphoserine" evidence="10">
    <location>
        <position position="525"/>
    </location>
</feature>
<feature type="modified residue" description="Phosphoserine" evidence="2">
    <location>
        <position position="549"/>
    </location>
</feature>
<feature type="modified residue" description="Phosphoserine" evidence="2">
    <location>
        <position position="556"/>
    </location>
</feature>
<feature type="modified residue" description="Phosphoserine" evidence="2">
    <location>
        <position position="557"/>
    </location>
</feature>
<feature type="modified residue" description="Phosphoserine" evidence="2">
    <location>
        <position position="655"/>
    </location>
</feature>
<feature type="modified residue" description="Phosphothreonine" evidence="2">
    <location>
        <position position="712"/>
    </location>
</feature>
<feature type="modified residue" description="Phosphoserine" evidence="2">
    <location>
        <position position="728"/>
    </location>
</feature>
<feature type="modified residue" description="Phosphoserine" evidence="2">
    <location>
        <position position="731"/>
    </location>
</feature>
<feature type="modified residue" description="Phosphoserine" evidence="2">
    <location>
        <position position="743"/>
    </location>
</feature>
<feature type="modified residue" description="Phosphoserine" evidence="2">
    <location>
        <position position="751"/>
    </location>
</feature>
<feature type="modified residue" description="Phosphoserine" evidence="10">
    <location>
        <position position="761"/>
    </location>
</feature>
<feature type="modified residue" description="Phosphoserine" evidence="2">
    <location>
        <position position="773"/>
    </location>
</feature>
<feature type="modified residue" description="Phosphoserine" evidence="2">
    <location>
        <position position="792"/>
    </location>
</feature>
<feature type="modified residue" description="Phosphoserine" evidence="2">
    <location>
        <position position="796"/>
    </location>
</feature>
<feature type="modified residue" description="Phosphoserine" evidence="2">
    <location>
        <position position="818"/>
    </location>
</feature>
<dbReference type="EC" id="2.7.11.25"/>
<dbReference type="EMBL" id="BC081952">
    <property type="protein sequence ID" value="AAH81952.1"/>
    <property type="molecule type" value="mRNA"/>
</dbReference>
<dbReference type="EMBL" id="AY240868">
    <property type="protein sequence ID" value="AAO91627.1"/>
    <property type="molecule type" value="mRNA"/>
</dbReference>
<dbReference type="RefSeq" id="NP_001013168.1">
    <property type="nucleotide sequence ID" value="NM_001013150.1"/>
</dbReference>
<dbReference type="SMR" id="Q66HA1"/>
<dbReference type="BioGRID" id="259295">
    <property type="interactions" value="3"/>
</dbReference>
<dbReference type="FunCoup" id="Q66HA1">
    <property type="interactions" value="1505"/>
</dbReference>
<dbReference type="IntAct" id="Q66HA1">
    <property type="interactions" value="2"/>
</dbReference>
<dbReference type="MINT" id="Q66HA1"/>
<dbReference type="STRING" id="10116.ENSRNOP00000028185"/>
<dbReference type="GlyGen" id="Q66HA1">
    <property type="glycosylation" value="3 sites"/>
</dbReference>
<dbReference type="iPTMnet" id="Q66HA1"/>
<dbReference type="PhosphoSitePlus" id="Q66HA1"/>
<dbReference type="PaxDb" id="10116-ENSRNOP00000028185"/>
<dbReference type="Ensembl" id="ENSRNOT00000028185.6">
    <property type="protein sequence ID" value="ENSRNOP00000028185.4"/>
    <property type="gene ID" value="ENSRNOG00000020773.6"/>
</dbReference>
<dbReference type="GeneID" id="309168"/>
<dbReference type="KEGG" id="rno:309168"/>
<dbReference type="UCSC" id="RGD:1359261">
    <property type="organism name" value="rat"/>
</dbReference>
<dbReference type="AGR" id="RGD:1359261"/>
<dbReference type="CTD" id="4296"/>
<dbReference type="RGD" id="1359261">
    <property type="gene designation" value="Map3k11"/>
</dbReference>
<dbReference type="eggNOG" id="KOG0192">
    <property type="taxonomic scope" value="Eukaryota"/>
</dbReference>
<dbReference type="GeneTree" id="ENSGT00940000161064"/>
<dbReference type="HOGENOM" id="CLU_000288_7_14_1"/>
<dbReference type="InParanoid" id="Q66HA1"/>
<dbReference type="OMA" id="HLSPKMP"/>
<dbReference type="OrthoDB" id="339325at2759"/>
<dbReference type="PhylomeDB" id="Q66HA1"/>
<dbReference type="Reactome" id="R-RNO-5673000">
    <property type="pathway name" value="RAF activation"/>
</dbReference>
<dbReference type="Reactome" id="R-RNO-9013408">
    <property type="pathway name" value="RHOG GTPase cycle"/>
</dbReference>
<dbReference type="Reactome" id="R-RNO-9013424">
    <property type="pathway name" value="RHOV GTPase cycle"/>
</dbReference>
<dbReference type="PRO" id="PR:Q66HA1"/>
<dbReference type="Proteomes" id="UP000002494">
    <property type="component" value="Chromosome 1"/>
</dbReference>
<dbReference type="Bgee" id="ENSRNOG00000020773">
    <property type="expression patterns" value="Expressed in jejunum and 19 other cell types or tissues"/>
</dbReference>
<dbReference type="GO" id="GO:0005813">
    <property type="term" value="C:centrosome"/>
    <property type="evidence" value="ECO:0000266"/>
    <property type="project" value="RGD"/>
</dbReference>
<dbReference type="GO" id="GO:0005737">
    <property type="term" value="C:cytoplasm"/>
    <property type="evidence" value="ECO:0000318"/>
    <property type="project" value="GO_Central"/>
</dbReference>
<dbReference type="GO" id="GO:0005874">
    <property type="term" value="C:microtubule"/>
    <property type="evidence" value="ECO:0000266"/>
    <property type="project" value="RGD"/>
</dbReference>
<dbReference type="GO" id="GO:0005524">
    <property type="term" value="F:ATP binding"/>
    <property type="evidence" value="ECO:0000314"/>
    <property type="project" value="RGD"/>
</dbReference>
<dbReference type="GO" id="GO:0042802">
    <property type="term" value="F:identical protein binding"/>
    <property type="evidence" value="ECO:0000266"/>
    <property type="project" value="RGD"/>
</dbReference>
<dbReference type="GO" id="GO:0004706">
    <property type="term" value="F:JUN kinase kinase kinase activity"/>
    <property type="evidence" value="ECO:0000314"/>
    <property type="project" value="RGD"/>
</dbReference>
<dbReference type="GO" id="GO:0004709">
    <property type="term" value="F:MAP kinase kinase kinase activity"/>
    <property type="evidence" value="ECO:0000314"/>
    <property type="project" value="RGD"/>
</dbReference>
<dbReference type="GO" id="GO:0031434">
    <property type="term" value="F:mitogen-activated protein kinase kinase binding"/>
    <property type="evidence" value="ECO:0000353"/>
    <property type="project" value="RGD"/>
</dbReference>
<dbReference type="GO" id="GO:0031435">
    <property type="term" value="F:mitogen-activated protein kinase kinase kinase binding"/>
    <property type="evidence" value="ECO:0000266"/>
    <property type="project" value="RGD"/>
</dbReference>
<dbReference type="GO" id="GO:0042803">
    <property type="term" value="F:protein homodimerization activity"/>
    <property type="evidence" value="ECO:0000266"/>
    <property type="project" value="RGD"/>
</dbReference>
<dbReference type="GO" id="GO:0106310">
    <property type="term" value="F:protein serine kinase activity"/>
    <property type="evidence" value="ECO:0007669"/>
    <property type="project" value="RHEA"/>
</dbReference>
<dbReference type="GO" id="GO:0004674">
    <property type="term" value="F:protein serine/threonine kinase activity"/>
    <property type="evidence" value="ECO:0000314"/>
    <property type="project" value="RGD"/>
</dbReference>
<dbReference type="GO" id="GO:0031267">
    <property type="term" value="F:small GTPase binding"/>
    <property type="evidence" value="ECO:0000353"/>
    <property type="project" value="RGD"/>
</dbReference>
<dbReference type="GO" id="GO:0044843">
    <property type="term" value="P:cell cycle G1/S phase transition"/>
    <property type="evidence" value="ECO:0000266"/>
    <property type="project" value="RGD"/>
</dbReference>
<dbReference type="GO" id="GO:0007254">
    <property type="term" value="P:JNK cascade"/>
    <property type="evidence" value="ECO:0000314"/>
    <property type="project" value="RGD"/>
</dbReference>
<dbReference type="GO" id="GO:0000165">
    <property type="term" value="P:MAPK cascade"/>
    <property type="evidence" value="ECO:0000266"/>
    <property type="project" value="RGD"/>
</dbReference>
<dbReference type="GO" id="GO:0007017">
    <property type="term" value="P:microtubule-based process"/>
    <property type="evidence" value="ECO:0000266"/>
    <property type="project" value="RGD"/>
</dbReference>
<dbReference type="GO" id="GO:0043065">
    <property type="term" value="P:positive regulation of apoptotic process"/>
    <property type="evidence" value="ECO:0000315"/>
    <property type="project" value="RGD"/>
</dbReference>
<dbReference type="GO" id="GO:0046330">
    <property type="term" value="P:positive regulation of JNK cascade"/>
    <property type="evidence" value="ECO:0000314"/>
    <property type="project" value="RGD"/>
</dbReference>
<dbReference type="GO" id="GO:0043525">
    <property type="term" value="P:positive regulation of neuron apoptotic process"/>
    <property type="evidence" value="ECO:0000315"/>
    <property type="project" value="RGD"/>
</dbReference>
<dbReference type="CDD" id="cd12059">
    <property type="entry name" value="SH3_MLK1-3"/>
    <property type="match status" value="1"/>
</dbReference>
<dbReference type="CDD" id="cd14147">
    <property type="entry name" value="STKc_MLK3"/>
    <property type="match status" value="1"/>
</dbReference>
<dbReference type="FunFam" id="1.10.510.10:FF:000076">
    <property type="entry name" value="Mitogen-activated protein kinase kinase kinase"/>
    <property type="match status" value="1"/>
</dbReference>
<dbReference type="FunFam" id="2.30.30.40:FF:000079">
    <property type="entry name" value="Mitogen-activated protein kinase kinase kinase"/>
    <property type="match status" value="1"/>
</dbReference>
<dbReference type="FunFam" id="3.30.200.20:FF:000085">
    <property type="entry name" value="Mitogen-activated protein kinase kinase kinase"/>
    <property type="match status" value="1"/>
</dbReference>
<dbReference type="Gene3D" id="3.30.200.20">
    <property type="entry name" value="Phosphorylase Kinase, domain 1"/>
    <property type="match status" value="1"/>
</dbReference>
<dbReference type="Gene3D" id="2.30.30.40">
    <property type="entry name" value="SH3 Domains"/>
    <property type="match status" value="1"/>
</dbReference>
<dbReference type="Gene3D" id="1.10.510.10">
    <property type="entry name" value="Transferase(Phosphotransferase) domain 1"/>
    <property type="match status" value="1"/>
</dbReference>
<dbReference type="InterPro" id="IPR011009">
    <property type="entry name" value="Kinase-like_dom_sf"/>
</dbReference>
<dbReference type="InterPro" id="IPR035779">
    <property type="entry name" value="MLK1-3_SH3"/>
</dbReference>
<dbReference type="InterPro" id="IPR016231">
    <property type="entry name" value="MLK1-4"/>
</dbReference>
<dbReference type="InterPro" id="IPR000719">
    <property type="entry name" value="Prot_kinase_dom"/>
</dbReference>
<dbReference type="InterPro" id="IPR017441">
    <property type="entry name" value="Protein_kinase_ATP_BS"/>
</dbReference>
<dbReference type="InterPro" id="IPR001245">
    <property type="entry name" value="Ser-Thr/Tyr_kinase_cat_dom"/>
</dbReference>
<dbReference type="InterPro" id="IPR008271">
    <property type="entry name" value="Ser/Thr_kinase_AS"/>
</dbReference>
<dbReference type="InterPro" id="IPR051681">
    <property type="entry name" value="Ser/Thr_Kinases-Pseudokinases"/>
</dbReference>
<dbReference type="InterPro" id="IPR036028">
    <property type="entry name" value="SH3-like_dom_sf"/>
</dbReference>
<dbReference type="InterPro" id="IPR001452">
    <property type="entry name" value="SH3_domain"/>
</dbReference>
<dbReference type="PANTHER" id="PTHR44329:SF46">
    <property type="entry name" value="MITOGEN-ACTIVATED PROTEIN KINASE KINASE KINASE 11"/>
    <property type="match status" value="1"/>
</dbReference>
<dbReference type="PANTHER" id="PTHR44329">
    <property type="entry name" value="SERINE/THREONINE-PROTEIN KINASE TNNI3K-RELATED"/>
    <property type="match status" value="1"/>
</dbReference>
<dbReference type="Pfam" id="PF07714">
    <property type="entry name" value="PK_Tyr_Ser-Thr"/>
    <property type="match status" value="1"/>
</dbReference>
<dbReference type="Pfam" id="PF14604">
    <property type="entry name" value="SH3_9"/>
    <property type="match status" value="1"/>
</dbReference>
<dbReference type="PIRSF" id="PIRSF000556">
    <property type="entry name" value="MAPKKK9_11"/>
    <property type="match status" value="1"/>
</dbReference>
<dbReference type="PRINTS" id="PR00452">
    <property type="entry name" value="SH3DOMAIN"/>
</dbReference>
<dbReference type="PRINTS" id="PR00109">
    <property type="entry name" value="TYRKINASE"/>
</dbReference>
<dbReference type="SMART" id="SM00220">
    <property type="entry name" value="S_TKc"/>
    <property type="match status" value="1"/>
</dbReference>
<dbReference type="SMART" id="SM00326">
    <property type="entry name" value="SH3"/>
    <property type="match status" value="1"/>
</dbReference>
<dbReference type="SUPFAM" id="SSF56112">
    <property type="entry name" value="Protein kinase-like (PK-like)"/>
    <property type="match status" value="1"/>
</dbReference>
<dbReference type="SUPFAM" id="SSF50044">
    <property type="entry name" value="SH3-domain"/>
    <property type="match status" value="1"/>
</dbReference>
<dbReference type="PROSITE" id="PS00107">
    <property type="entry name" value="PROTEIN_KINASE_ATP"/>
    <property type="match status" value="1"/>
</dbReference>
<dbReference type="PROSITE" id="PS50011">
    <property type="entry name" value="PROTEIN_KINASE_DOM"/>
    <property type="match status" value="1"/>
</dbReference>
<dbReference type="PROSITE" id="PS00108">
    <property type="entry name" value="PROTEIN_KINASE_ST"/>
    <property type="match status" value="1"/>
</dbReference>
<dbReference type="PROSITE" id="PS50002">
    <property type="entry name" value="SH3"/>
    <property type="match status" value="1"/>
</dbReference>
<sequence>MEPLKNLFLKSPLGSWNGSGSGGGGGSGGVRPEGSPKATAAYANPVWTALFDYEPNGQDELALRKGDRVEVLSRDAAISGDEGWWAGQVGGQVGIFPSNYVSRGGGPPPCEVASFQELRLEEVIGIGGFGKVYRGSWRGELVAVKAARQDPDEDISVTAESVRQEARLFAMLAHPNIIALKAVCLEEPNLCLVMEYAAGGPLSRALAGRRVPPHVLVNWAVQIARGMHYLHCEALVPVIHRDLKSNNILLLQPIEGDDMEHKTLKITDFGLAREWHKTTQMSAAGTYAWMAPEVIKASTFSKGSDVWSFGVLLWELLTGEVPYRGIDCLAVAYGVAVNKLTLPIPSTCPEPFAQLMADCWAQDPHRRPDFASILQQLEALEAQVLREMPRDSFHSMQEGWKREIQGLFDELRAKEKELLSREEELTRAAREQRSQAEQLRRREHLLAQWELEVFERELTLLLQQVDRERPHVRRRRGTFKRSKLRARDGGERISMPLDFKHRITVQASPGLDRRRNVFEVGAGDSPTFPRFRAIQLEPAESGQTWGRQSPRRLDDSSNGERRACWAWGPSSPKPGEAQNGRRRSRMDEATWYLDSDDSSPLGSPSTPPALNGNPPRPSPEPEEPRRSGPTERGNSSGTPKLIQRALLRGTALLASLGLGRDLQPPGGLSRERGESPTAPPPAQMASPCPPDLPSTPLIHLSQATPDARGPLTPAPLLLDLGVSSGQPSAKSPRREETRGRTVSPPPGISRSAPGTPGTPRSPPLGLISRPRPSPLRNRIDPWSFVSAGPRPSPLPSPQPAPRRAPWTLFPDSDPFWDSPPANPFRGGSQDCRTQTKDVGAQAPWAPEAGP</sequence>
<proteinExistence type="evidence at protein level"/>
<gene>
    <name type="primary">Map3k11</name>
    <name type="synonym">Mlk3</name>
</gene>
<keyword id="KW-0067">ATP-binding</keyword>
<keyword id="KW-0963">Cytoplasm</keyword>
<keyword id="KW-0206">Cytoskeleton</keyword>
<keyword id="KW-0418">Kinase</keyword>
<keyword id="KW-0547">Nucleotide-binding</keyword>
<keyword id="KW-0597">Phosphoprotein</keyword>
<keyword id="KW-1185">Reference proteome</keyword>
<keyword id="KW-0677">Repeat</keyword>
<keyword id="KW-0723">Serine/threonine-protein kinase</keyword>
<keyword id="KW-0728">SH3 domain</keyword>
<keyword id="KW-0808">Transferase</keyword>
<accession>Q66HA1</accession>
<accession>Q80YF1</accession>
<evidence type="ECO:0000250" key="1"/>
<evidence type="ECO:0000250" key="2">
    <source>
        <dbReference type="UniProtKB" id="Q16584"/>
    </source>
</evidence>
<evidence type="ECO:0000250" key="3">
    <source>
        <dbReference type="UniProtKB" id="Q80XI6"/>
    </source>
</evidence>
<evidence type="ECO:0000255" key="4">
    <source>
        <dbReference type="PROSITE-ProRule" id="PRU00159"/>
    </source>
</evidence>
<evidence type="ECO:0000255" key="5">
    <source>
        <dbReference type="PROSITE-ProRule" id="PRU00192"/>
    </source>
</evidence>
<evidence type="ECO:0000255" key="6">
    <source>
        <dbReference type="PROSITE-ProRule" id="PRU10027"/>
    </source>
</evidence>
<evidence type="ECO:0000256" key="7">
    <source>
        <dbReference type="SAM" id="MobiDB-lite"/>
    </source>
</evidence>
<evidence type="ECO:0000269" key="8">
    <source>
    </source>
</evidence>
<evidence type="ECO:0000305" key="9"/>
<evidence type="ECO:0007744" key="10">
    <source>
    </source>
</evidence>
<protein>
    <recommendedName>
        <fullName>Mitogen-activated protein kinase kinase kinase 11</fullName>
        <ecNumber>2.7.11.25</ecNumber>
    </recommendedName>
    <alternativeName>
        <fullName>Mixed lineage kinase 3</fullName>
    </alternativeName>
</protein>
<reference key="1">
    <citation type="journal article" date="2004" name="Genome Res.">
        <title>The status, quality, and expansion of the NIH full-length cDNA project: the Mammalian Gene Collection (MGC).</title>
        <authorList>
            <consortium name="The MGC Project Team"/>
        </authorList>
    </citation>
    <scope>NUCLEOTIDE SEQUENCE [LARGE SCALE MRNA]</scope>
    <source>
        <tissue>Lung</tissue>
    </source>
</reference>
<reference key="2">
    <citation type="journal article" date="2004" name="J. Neurochem.">
        <title>CEP11004, a novel inhibitor of the mixed lineage kinases, suppresses apoptotic death in dopamine neurons of the substantia nigra induced by 6-hydroxydopamine.</title>
        <authorList>
            <person name="Ganguly A."/>
            <person name="Oo T.F."/>
            <person name="Rzhetskaya M."/>
            <person name="Pratt R."/>
            <person name="Yarygina O."/>
            <person name="Momoi T."/>
            <person name="Kholodilov N."/>
            <person name="Burke R.E."/>
        </authorList>
    </citation>
    <scope>NUCLEOTIDE SEQUENCE [MRNA] OF 778-850</scope>
    <source>
        <strain>Sprague-Dawley</strain>
    </source>
</reference>
<reference key="3">
    <citation type="journal article" date="2003" name="Life Sci.">
        <title>Delayed activation and regulation of MKK7 in hippocampal CA1 region following global cerebral ischemia in rats.</title>
        <authorList>
            <person name="Zhang Q."/>
            <person name="Tian H."/>
            <person name="Fu X."/>
            <person name="Zhang G."/>
        </authorList>
    </citation>
    <scope>INTERACTION WITH MAP2K7/MKK7</scope>
</reference>
<reference key="4">
    <citation type="journal article" date="2012" name="Nat. Commun.">
        <title>Quantitative maps of protein phosphorylation sites across 14 different rat organs and tissues.</title>
        <authorList>
            <person name="Lundby A."/>
            <person name="Secher A."/>
            <person name="Lage K."/>
            <person name="Nordsborg N.B."/>
            <person name="Dmytriyev A."/>
            <person name="Lundby C."/>
            <person name="Olsen J.V."/>
        </authorList>
    </citation>
    <scope>PHOSPHORYLATION [LARGE SCALE ANALYSIS] AT SER-508; SER-525 AND SER-761</scope>
    <scope>IDENTIFICATION BY MASS SPECTROMETRY [LARGE SCALE ANALYSIS]</scope>
</reference>
<organism>
    <name type="scientific">Rattus norvegicus</name>
    <name type="common">Rat</name>
    <dbReference type="NCBI Taxonomy" id="10116"/>
    <lineage>
        <taxon>Eukaryota</taxon>
        <taxon>Metazoa</taxon>
        <taxon>Chordata</taxon>
        <taxon>Craniata</taxon>
        <taxon>Vertebrata</taxon>
        <taxon>Euteleostomi</taxon>
        <taxon>Mammalia</taxon>
        <taxon>Eutheria</taxon>
        <taxon>Euarchontoglires</taxon>
        <taxon>Glires</taxon>
        <taxon>Rodentia</taxon>
        <taxon>Myomorpha</taxon>
        <taxon>Muroidea</taxon>
        <taxon>Muridae</taxon>
        <taxon>Murinae</taxon>
        <taxon>Rattus</taxon>
    </lineage>
</organism>
<comment type="function">
    <text evidence="1">Activates the JUN N-terminal pathway. Required for serum-stimulated cell proliferation and for mitogen and cytokine activation of MAPK14 (p38), MAPK3 (ERK) and MAPK8 (JNK1) through phosphorylation and activation of MAP2K4/MKK4 and MAP2K7/MKK7. Plays a role in mitogen-stimulated phosphorylation and activation of BRAF, but does not phosphorylate BRAF directly. Influences microtubule organization during the cell cycle (By similarity).</text>
</comment>
<comment type="catalytic activity">
    <reaction>
        <text>L-seryl-[protein] + ATP = O-phospho-L-seryl-[protein] + ADP + H(+)</text>
        <dbReference type="Rhea" id="RHEA:17989"/>
        <dbReference type="Rhea" id="RHEA-COMP:9863"/>
        <dbReference type="Rhea" id="RHEA-COMP:11604"/>
        <dbReference type="ChEBI" id="CHEBI:15378"/>
        <dbReference type="ChEBI" id="CHEBI:29999"/>
        <dbReference type="ChEBI" id="CHEBI:30616"/>
        <dbReference type="ChEBI" id="CHEBI:83421"/>
        <dbReference type="ChEBI" id="CHEBI:456216"/>
        <dbReference type="EC" id="2.7.11.25"/>
    </reaction>
</comment>
<comment type="catalytic activity">
    <reaction>
        <text>L-threonyl-[protein] + ATP = O-phospho-L-threonyl-[protein] + ADP + H(+)</text>
        <dbReference type="Rhea" id="RHEA:46608"/>
        <dbReference type="Rhea" id="RHEA-COMP:11060"/>
        <dbReference type="Rhea" id="RHEA-COMP:11605"/>
        <dbReference type="ChEBI" id="CHEBI:15378"/>
        <dbReference type="ChEBI" id="CHEBI:30013"/>
        <dbReference type="ChEBI" id="CHEBI:30616"/>
        <dbReference type="ChEBI" id="CHEBI:61977"/>
        <dbReference type="ChEBI" id="CHEBI:456216"/>
        <dbReference type="EC" id="2.7.11.25"/>
    </reaction>
</comment>
<comment type="cofactor">
    <cofactor evidence="1">
        <name>Mg(2+)</name>
        <dbReference type="ChEBI" id="CHEBI:18420"/>
    </cofactor>
</comment>
<comment type="activity regulation">
    <text evidence="1">Homodimerization via the leucine zipper domains is required for autophosphorylation and subsequent activation (By similarity).</text>
</comment>
<comment type="subunit">
    <text evidence="3 8">Homodimer; undergoes dimerization during activation. Interacts with MAP2K4/MKK4 (By similarity). Interacts with MAP2K7/MKK7 (PubMed:14575811). Found in a complex with SH3RF1, RAC1, MAP2K7/MKK7, MAPK8IP1/JIP1 and MAPK8/JNK1 (By similarity).</text>
</comment>
<comment type="interaction">
    <interactant intactId="EBI-4279420">
        <id>Q66HA1</id>
    </interactant>
    <interactant intactId="EBI-7809795">
        <id>P42260</id>
        <label>Grik2</label>
    </interactant>
    <organismsDiffer>false</organismsDiffer>
    <experiments>2</experiments>
</comment>
<comment type="subcellular location">
    <subcellularLocation>
        <location>Cytoplasm</location>
        <location>Cytoskeleton</location>
        <location>Microtubule organizing center</location>
        <location>Centrosome</location>
    </subcellularLocation>
    <text evidence="1">Location is cell cycle dependent.</text>
</comment>
<comment type="PTM">
    <text evidence="1">Autophosphorylation on serine and threonine residues within the activation loop plays a role in enzyme activation. Thr-278 is likely to be the main autophosphorylation site. Phosphorylation of Ser-556 and Ser-557 is induced by CDC42 (By similarity).</text>
</comment>
<comment type="similarity">
    <text evidence="9">Belongs to the protein kinase superfamily. STE Ser/Thr protein kinase family. MAP kinase kinase kinase subfamily.</text>
</comment>
<name>M3K11_RAT</name>